<sequence>MDSRLHRLINLEVTPGKDVRKTAIIGTIGPKTNNVDTLVALRKAGLNIVRMNFSHGSYEYHQSVIDNARKSEQVYPGRPLAIALDTKGPEIRTGTNVDDVDYPIPPNHEMIFTTDDKYAKACDDKIMYVDYKNITKVIQPGKVIYVDDGVLSFEVLEVVDDKTLKVKSLNAGKISSHKGVNLPGTDVDLPALSEKDKEDLRFGVKNGVHMIFASFIRTAQDVLTIREVLGEEGKDIKVIVKIENQQGVNNFDEILEVAHGVMVARGDLGIEIPAPQVLAVQKKLIAKCNLAGKPVICATQMLESMTFNPRPTRAEVSDVGNAILDGADCVMLSGETAKGNYPINAVTTMAETAIIAERAIAYMPLYDDLRNCTPKPTSTTETVAASAVAAVQEQGAKLILVLSTSGNTARLVSKYRPQCPIVLVTRNPRTARFSHLFRGVFPFVYEKEPLDDWSEDTHARLRFGVDMAKEYGFVKNGDAVISIQGFKGGVGHSNTMRVSIVGGEKEDI</sequence>
<keyword id="KW-0067">ATP-binding</keyword>
<keyword id="KW-0324">Glycolysis</keyword>
<keyword id="KW-0418">Kinase</keyword>
<keyword id="KW-0460">Magnesium</keyword>
<keyword id="KW-0479">Metal-binding</keyword>
<keyword id="KW-0547">Nucleotide-binding</keyword>
<keyword id="KW-0630">Potassium</keyword>
<keyword id="KW-0670">Pyruvate</keyword>
<keyword id="KW-1185">Reference proteome</keyword>
<keyword id="KW-0808">Transferase</keyword>
<comment type="catalytic activity">
    <reaction>
        <text>pyruvate + ATP = phosphoenolpyruvate + ADP + H(+)</text>
        <dbReference type="Rhea" id="RHEA:18157"/>
        <dbReference type="ChEBI" id="CHEBI:15361"/>
        <dbReference type="ChEBI" id="CHEBI:15378"/>
        <dbReference type="ChEBI" id="CHEBI:30616"/>
        <dbReference type="ChEBI" id="CHEBI:58702"/>
        <dbReference type="ChEBI" id="CHEBI:456216"/>
        <dbReference type="EC" id="2.7.1.40"/>
    </reaction>
</comment>
<comment type="cofactor">
    <cofactor>
        <name>Mg(2+)</name>
        <dbReference type="ChEBI" id="CHEBI:18420"/>
    </cofactor>
</comment>
<comment type="cofactor">
    <cofactor>
        <name>K(+)</name>
        <dbReference type="ChEBI" id="CHEBI:29103"/>
    </cofactor>
</comment>
<comment type="pathway">
    <text>Carbohydrate degradation; glycolysis; pyruvate from D-glyceraldehyde 3-phosphate: step 5/5.</text>
</comment>
<comment type="subunit">
    <text evidence="1">Homotetramer.</text>
</comment>
<comment type="similarity">
    <text evidence="4">Belongs to the pyruvate kinase family.</text>
</comment>
<reference key="1">
    <citation type="journal article" date="2004" name="Nature">
        <title>Genome evolution in yeasts.</title>
        <authorList>
            <person name="Dujon B."/>
            <person name="Sherman D."/>
            <person name="Fischer G."/>
            <person name="Durrens P."/>
            <person name="Casaregola S."/>
            <person name="Lafontaine I."/>
            <person name="de Montigny J."/>
            <person name="Marck C."/>
            <person name="Neuveglise C."/>
            <person name="Talla E."/>
            <person name="Goffard N."/>
            <person name="Frangeul L."/>
            <person name="Aigle M."/>
            <person name="Anthouard V."/>
            <person name="Babour A."/>
            <person name="Barbe V."/>
            <person name="Barnay S."/>
            <person name="Blanchin S."/>
            <person name="Beckerich J.-M."/>
            <person name="Beyne E."/>
            <person name="Bleykasten C."/>
            <person name="Boisrame A."/>
            <person name="Boyer J."/>
            <person name="Cattolico L."/>
            <person name="Confanioleri F."/>
            <person name="de Daruvar A."/>
            <person name="Despons L."/>
            <person name="Fabre E."/>
            <person name="Fairhead C."/>
            <person name="Ferry-Dumazet H."/>
            <person name="Groppi A."/>
            <person name="Hantraye F."/>
            <person name="Hennequin C."/>
            <person name="Jauniaux N."/>
            <person name="Joyet P."/>
            <person name="Kachouri R."/>
            <person name="Kerrest A."/>
            <person name="Koszul R."/>
            <person name="Lemaire M."/>
            <person name="Lesur I."/>
            <person name="Ma L."/>
            <person name="Muller H."/>
            <person name="Nicaud J.-M."/>
            <person name="Nikolski M."/>
            <person name="Oztas S."/>
            <person name="Ozier-Kalogeropoulos O."/>
            <person name="Pellenz S."/>
            <person name="Potier S."/>
            <person name="Richard G.-F."/>
            <person name="Straub M.-L."/>
            <person name="Suleau A."/>
            <person name="Swennen D."/>
            <person name="Tekaia F."/>
            <person name="Wesolowski-Louvel M."/>
            <person name="Westhof E."/>
            <person name="Wirth B."/>
            <person name="Zeniou-Meyer M."/>
            <person name="Zivanovic Y."/>
            <person name="Bolotin-Fukuhara M."/>
            <person name="Thierry A."/>
            <person name="Bouchier C."/>
            <person name="Caudron B."/>
            <person name="Scarpelli C."/>
            <person name="Gaillardin C."/>
            <person name="Weissenbach J."/>
            <person name="Wincker P."/>
            <person name="Souciet J.-L."/>
        </authorList>
    </citation>
    <scope>NUCLEOTIDE SEQUENCE [LARGE SCALE GENOMIC DNA]</scope>
    <source>
        <strain>ATCC 2001 / BCRC 20586 / JCM 3761 / NBRC 0622 / NRRL Y-65 / CBS 138</strain>
    </source>
</reference>
<proteinExistence type="inferred from homology"/>
<name>KPYK2_CANGA</name>
<organism>
    <name type="scientific">Candida glabrata (strain ATCC 2001 / BCRC 20586 / JCM 3761 / NBRC 0622 / NRRL Y-65 / CBS 138)</name>
    <name type="common">Yeast</name>
    <name type="synonym">Nakaseomyces glabratus</name>
    <dbReference type="NCBI Taxonomy" id="284593"/>
    <lineage>
        <taxon>Eukaryota</taxon>
        <taxon>Fungi</taxon>
        <taxon>Dikarya</taxon>
        <taxon>Ascomycota</taxon>
        <taxon>Saccharomycotina</taxon>
        <taxon>Saccharomycetes</taxon>
        <taxon>Saccharomycetales</taxon>
        <taxon>Saccharomycetaceae</taxon>
        <taxon>Nakaseomyces</taxon>
    </lineage>
</organism>
<protein>
    <recommendedName>
        <fullName>Pyruvate kinase 2</fullName>
        <shortName>PK 2</shortName>
        <ecNumber>2.7.1.40</ecNumber>
    </recommendedName>
</protein>
<evidence type="ECO:0000250" key="1"/>
<evidence type="ECO:0000250" key="2">
    <source>
        <dbReference type="UniProtKB" id="P14618"/>
    </source>
</evidence>
<evidence type="ECO:0000255" key="3"/>
<evidence type="ECO:0000305" key="4"/>
<accession>Q6FV12</accession>
<feature type="chain" id="PRO_0000112111" description="Pyruvate kinase 2">
    <location>
        <begin position="1"/>
        <end position="508"/>
    </location>
</feature>
<feature type="binding site" evidence="1">
    <location>
        <position position="50"/>
    </location>
    <ligand>
        <name>substrate</name>
    </ligand>
</feature>
<feature type="binding site" evidence="2">
    <location>
        <begin position="52"/>
        <end position="55"/>
    </location>
    <ligand>
        <name>ATP</name>
        <dbReference type="ChEBI" id="CHEBI:30616"/>
    </ligand>
</feature>
<feature type="binding site" evidence="1">
    <location>
        <position position="52"/>
    </location>
    <ligand>
        <name>K(+)</name>
        <dbReference type="ChEBI" id="CHEBI:29103"/>
    </ligand>
</feature>
<feature type="binding site" evidence="1">
    <location>
        <position position="54"/>
    </location>
    <ligand>
        <name>K(+)</name>
        <dbReference type="ChEBI" id="CHEBI:29103"/>
    </ligand>
</feature>
<feature type="binding site" evidence="1">
    <location>
        <position position="85"/>
    </location>
    <ligand>
        <name>K(+)</name>
        <dbReference type="ChEBI" id="CHEBI:29103"/>
    </ligand>
</feature>
<feature type="binding site" evidence="1">
    <location>
        <position position="86"/>
    </location>
    <ligand>
        <name>K(+)</name>
        <dbReference type="ChEBI" id="CHEBI:29103"/>
    </ligand>
</feature>
<feature type="binding site" evidence="2">
    <location>
        <position position="92"/>
    </location>
    <ligand>
        <name>ATP</name>
        <dbReference type="ChEBI" id="CHEBI:30616"/>
    </ligand>
</feature>
<feature type="binding site" evidence="2">
    <location>
        <position position="178"/>
    </location>
    <ligand>
        <name>ATP</name>
        <dbReference type="ChEBI" id="CHEBI:30616"/>
    </ligand>
</feature>
<feature type="binding site" evidence="3">
    <location>
        <position position="243"/>
    </location>
    <ligand>
        <name>Mg(2+)</name>
        <dbReference type="ChEBI" id="CHEBI:18420"/>
    </ligand>
</feature>
<feature type="binding site" evidence="1">
    <location>
        <position position="266"/>
    </location>
    <ligand>
        <name>substrate</name>
    </ligand>
</feature>
<feature type="binding site" evidence="1">
    <location>
        <position position="267"/>
    </location>
    <ligand>
        <name>Mg(2+)</name>
        <dbReference type="ChEBI" id="CHEBI:18420"/>
    </ligand>
</feature>
<feature type="binding site" evidence="1">
    <location>
        <position position="267"/>
    </location>
    <ligand>
        <name>substrate</name>
    </ligand>
</feature>
<feature type="binding site" evidence="1">
    <location>
        <position position="299"/>
    </location>
    <ligand>
        <name>substrate</name>
    </ligand>
</feature>
<feature type="site" description="Transition state stabilizer" evidence="1">
    <location>
        <position position="241"/>
    </location>
</feature>
<dbReference type="EC" id="2.7.1.40"/>
<dbReference type="EMBL" id="CR380951">
    <property type="protein sequence ID" value="CAG58851.1"/>
    <property type="molecule type" value="Genomic_DNA"/>
</dbReference>
<dbReference type="RefSeq" id="XP_445932.1">
    <property type="nucleotide sequence ID" value="XM_445932.1"/>
</dbReference>
<dbReference type="SMR" id="Q6FV12"/>
<dbReference type="STRING" id="284593.Q6FV12"/>
<dbReference type="EnsemblFungi" id="CAGL0E05610g-T">
    <property type="protein sequence ID" value="CAGL0E05610g-T-p1"/>
    <property type="gene ID" value="CAGL0E05610g"/>
</dbReference>
<dbReference type="KEGG" id="cgr:2887537"/>
<dbReference type="CGD" id="CAL0128842">
    <property type="gene designation" value="CAGL0E05610g"/>
</dbReference>
<dbReference type="VEuPathDB" id="FungiDB:CAGL0E05610g"/>
<dbReference type="eggNOG" id="KOG2323">
    <property type="taxonomic scope" value="Eukaryota"/>
</dbReference>
<dbReference type="HOGENOM" id="CLU_015439_0_2_1"/>
<dbReference type="InParanoid" id="Q6FV12"/>
<dbReference type="OMA" id="ESANGHY"/>
<dbReference type="UniPathway" id="UPA00109">
    <property type="reaction ID" value="UER00188"/>
</dbReference>
<dbReference type="Proteomes" id="UP000002428">
    <property type="component" value="Chromosome E"/>
</dbReference>
<dbReference type="GO" id="GO:0062040">
    <property type="term" value="C:fungal biofilm matrix"/>
    <property type="evidence" value="ECO:0000314"/>
    <property type="project" value="CGD"/>
</dbReference>
<dbReference type="GO" id="GO:0005739">
    <property type="term" value="C:mitochondrion"/>
    <property type="evidence" value="ECO:0007669"/>
    <property type="project" value="EnsemblFungi"/>
</dbReference>
<dbReference type="GO" id="GO:0005524">
    <property type="term" value="F:ATP binding"/>
    <property type="evidence" value="ECO:0007669"/>
    <property type="project" value="UniProtKB-KW"/>
</dbReference>
<dbReference type="GO" id="GO:0016301">
    <property type="term" value="F:kinase activity"/>
    <property type="evidence" value="ECO:0007669"/>
    <property type="project" value="UniProtKB-KW"/>
</dbReference>
<dbReference type="GO" id="GO:0000287">
    <property type="term" value="F:magnesium ion binding"/>
    <property type="evidence" value="ECO:0007669"/>
    <property type="project" value="InterPro"/>
</dbReference>
<dbReference type="GO" id="GO:1904408">
    <property type="term" value="F:melatonin binding"/>
    <property type="evidence" value="ECO:0007669"/>
    <property type="project" value="EnsemblFungi"/>
</dbReference>
<dbReference type="GO" id="GO:0030955">
    <property type="term" value="F:potassium ion binding"/>
    <property type="evidence" value="ECO:0007669"/>
    <property type="project" value="InterPro"/>
</dbReference>
<dbReference type="GO" id="GO:0004743">
    <property type="term" value="F:pyruvate kinase activity"/>
    <property type="evidence" value="ECO:0007669"/>
    <property type="project" value="UniProtKB-EC"/>
</dbReference>
<dbReference type="CDD" id="cd00288">
    <property type="entry name" value="Pyruvate_Kinase"/>
    <property type="match status" value="1"/>
</dbReference>
<dbReference type="FunFam" id="2.40.33.10:FF:000001">
    <property type="entry name" value="Pyruvate kinase"/>
    <property type="match status" value="1"/>
</dbReference>
<dbReference type="FunFam" id="3.20.20.60:FF:000025">
    <property type="entry name" value="Pyruvate kinase"/>
    <property type="match status" value="1"/>
</dbReference>
<dbReference type="FunFam" id="3.40.1380.20:FF:000001">
    <property type="entry name" value="Pyruvate kinase"/>
    <property type="match status" value="1"/>
</dbReference>
<dbReference type="Gene3D" id="3.20.20.60">
    <property type="entry name" value="Phosphoenolpyruvate-binding domains"/>
    <property type="match status" value="1"/>
</dbReference>
<dbReference type="Gene3D" id="2.40.33.10">
    <property type="entry name" value="PK beta-barrel domain-like"/>
    <property type="match status" value="1"/>
</dbReference>
<dbReference type="Gene3D" id="3.40.1380.20">
    <property type="entry name" value="Pyruvate kinase, C-terminal domain"/>
    <property type="match status" value="1"/>
</dbReference>
<dbReference type="InterPro" id="IPR001697">
    <property type="entry name" value="Pyr_Knase"/>
</dbReference>
<dbReference type="InterPro" id="IPR015813">
    <property type="entry name" value="Pyrv/PenolPyrv_kinase-like_dom"/>
</dbReference>
<dbReference type="InterPro" id="IPR040442">
    <property type="entry name" value="Pyrv_kinase-like_dom_sf"/>
</dbReference>
<dbReference type="InterPro" id="IPR011037">
    <property type="entry name" value="Pyrv_Knase-like_insert_dom_sf"/>
</dbReference>
<dbReference type="InterPro" id="IPR018209">
    <property type="entry name" value="Pyrv_Knase_AS"/>
</dbReference>
<dbReference type="InterPro" id="IPR015793">
    <property type="entry name" value="Pyrv_Knase_brl"/>
</dbReference>
<dbReference type="InterPro" id="IPR015795">
    <property type="entry name" value="Pyrv_Knase_C"/>
</dbReference>
<dbReference type="InterPro" id="IPR036918">
    <property type="entry name" value="Pyrv_Knase_C_sf"/>
</dbReference>
<dbReference type="InterPro" id="IPR015806">
    <property type="entry name" value="Pyrv_Knase_insert_dom_sf"/>
</dbReference>
<dbReference type="NCBIfam" id="NF004491">
    <property type="entry name" value="PRK05826.1"/>
    <property type="match status" value="1"/>
</dbReference>
<dbReference type="NCBIfam" id="NF004978">
    <property type="entry name" value="PRK06354.1"/>
    <property type="match status" value="1"/>
</dbReference>
<dbReference type="NCBIfam" id="TIGR01064">
    <property type="entry name" value="pyruv_kin"/>
    <property type="match status" value="1"/>
</dbReference>
<dbReference type="PANTHER" id="PTHR11817">
    <property type="entry name" value="PYRUVATE KINASE"/>
    <property type="match status" value="1"/>
</dbReference>
<dbReference type="Pfam" id="PF00224">
    <property type="entry name" value="PK"/>
    <property type="match status" value="1"/>
</dbReference>
<dbReference type="Pfam" id="PF02887">
    <property type="entry name" value="PK_C"/>
    <property type="match status" value="1"/>
</dbReference>
<dbReference type="PRINTS" id="PR01050">
    <property type="entry name" value="PYRUVTKNASE"/>
</dbReference>
<dbReference type="SUPFAM" id="SSF51621">
    <property type="entry name" value="Phosphoenolpyruvate/pyruvate domain"/>
    <property type="match status" value="1"/>
</dbReference>
<dbReference type="SUPFAM" id="SSF50800">
    <property type="entry name" value="PK beta-barrel domain-like"/>
    <property type="match status" value="1"/>
</dbReference>
<dbReference type="SUPFAM" id="SSF52935">
    <property type="entry name" value="PK C-terminal domain-like"/>
    <property type="match status" value="1"/>
</dbReference>
<dbReference type="PROSITE" id="PS00110">
    <property type="entry name" value="PYRUVATE_KINASE"/>
    <property type="match status" value="1"/>
</dbReference>
<gene>
    <name type="primary">PYK2</name>
    <name type="ordered locus">CAGL0E05610g</name>
</gene>